<proteinExistence type="evidence at protein level"/>
<dbReference type="PIR" id="A01724">
    <property type="entry name" value="H3NJ4E"/>
</dbReference>
<dbReference type="SMR" id="P01461"/>
<dbReference type="GO" id="GO:0005576">
    <property type="term" value="C:extracellular region"/>
    <property type="evidence" value="ECO:0007669"/>
    <property type="project" value="UniProtKB-SubCell"/>
</dbReference>
<dbReference type="GO" id="GO:0016020">
    <property type="term" value="C:membrane"/>
    <property type="evidence" value="ECO:0007669"/>
    <property type="project" value="UniProtKB-KW"/>
</dbReference>
<dbReference type="GO" id="GO:0044218">
    <property type="term" value="C:other organism cell membrane"/>
    <property type="evidence" value="ECO:0007669"/>
    <property type="project" value="UniProtKB-KW"/>
</dbReference>
<dbReference type="GO" id="GO:0090729">
    <property type="term" value="F:toxin activity"/>
    <property type="evidence" value="ECO:0007669"/>
    <property type="project" value="UniProtKB-KW"/>
</dbReference>
<dbReference type="GO" id="GO:0031640">
    <property type="term" value="P:killing of cells of another organism"/>
    <property type="evidence" value="ECO:0007669"/>
    <property type="project" value="UniProtKB-KW"/>
</dbReference>
<dbReference type="CDD" id="cd00206">
    <property type="entry name" value="TFP_snake_toxin"/>
    <property type="match status" value="1"/>
</dbReference>
<dbReference type="FunFam" id="2.10.60.10:FF:000024">
    <property type="entry name" value="Cytotoxin 1"/>
    <property type="match status" value="1"/>
</dbReference>
<dbReference type="Gene3D" id="2.10.60.10">
    <property type="entry name" value="CD59"/>
    <property type="match status" value="1"/>
</dbReference>
<dbReference type="InterPro" id="IPR003572">
    <property type="entry name" value="Cytotoxin_Cobra"/>
</dbReference>
<dbReference type="InterPro" id="IPR003571">
    <property type="entry name" value="Snake_3FTx"/>
</dbReference>
<dbReference type="InterPro" id="IPR045860">
    <property type="entry name" value="Snake_toxin-like_sf"/>
</dbReference>
<dbReference type="InterPro" id="IPR018354">
    <property type="entry name" value="Snake_toxin_con_site"/>
</dbReference>
<dbReference type="InterPro" id="IPR054131">
    <property type="entry name" value="Toxin_cobra-type"/>
</dbReference>
<dbReference type="Pfam" id="PF21947">
    <property type="entry name" value="Toxin_cobra-type"/>
    <property type="match status" value="1"/>
</dbReference>
<dbReference type="PRINTS" id="PR00282">
    <property type="entry name" value="CYTOTOXIN"/>
</dbReference>
<dbReference type="SUPFAM" id="SSF57302">
    <property type="entry name" value="Snake toxin-like"/>
    <property type="match status" value="1"/>
</dbReference>
<dbReference type="PROSITE" id="PS00272">
    <property type="entry name" value="SNAKE_TOXIN"/>
    <property type="match status" value="1"/>
</dbReference>
<protein>
    <recommendedName>
        <fullName>Cytotoxin 4</fullName>
    </recommendedName>
    <alternativeName>
        <fullName>Toxin CM-11</fullName>
    </alternativeName>
</protein>
<comment type="function">
    <text evidence="1 2">Shows cytolytic activity on many different cells by forming pore in lipid membranes. In vivo, increases heart rate or kills the animal by cardiac arrest. In addition, it binds to heparin with high affinity, interacts with Kv channel-interacting protein 1 (KCNIP1) in a calcium-independent manner, and binds to integrin alpha-V/beta-3 (ITGAV/ITGB3) with moderate affinity.</text>
</comment>
<comment type="subunit">
    <text evidence="1">Monomer in solution; Homodimer and oligomer in the presence of negatively charged lipids forming a pore with a size ranging between 20 and 30 Angstroms.</text>
</comment>
<comment type="subcellular location">
    <subcellularLocation>
        <location evidence="3">Secreted</location>
    </subcellularLocation>
    <subcellularLocation>
        <location evidence="1">Target cell membrane</location>
    </subcellularLocation>
</comment>
<comment type="tissue specificity">
    <text evidence="4">Expressed by the venom gland.</text>
</comment>
<comment type="toxic dose">
    <text evidence="3">LD(50) is 4.0 mg/kg by intravenous injection.</text>
</comment>
<comment type="miscellaneous">
    <text evidence="4">Is classified as a S-type cytotoxin, since a serine residue stands at position 28 (Ser-29 in standard classification).</text>
</comment>
<comment type="similarity">
    <text evidence="4">Belongs to the three-finger toxin family. Short-chain subfamily. Type IA cytotoxin sub-subfamily.</text>
</comment>
<feature type="chain" id="PRO_0000093488" description="Cytotoxin 4" evidence="3">
    <location>
        <begin position="1"/>
        <end position="60"/>
    </location>
</feature>
<feature type="disulfide bond" evidence="1">
    <location>
        <begin position="3"/>
        <end position="21"/>
    </location>
</feature>
<feature type="disulfide bond" evidence="1">
    <location>
        <begin position="14"/>
        <end position="38"/>
    </location>
</feature>
<feature type="disulfide bond" evidence="1">
    <location>
        <begin position="42"/>
        <end position="53"/>
    </location>
</feature>
<feature type="disulfide bond" evidence="1">
    <location>
        <begin position="54"/>
        <end position="59"/>
    </location>
</feature>
<sequence>LKCNKLIPPFWKTCPKGKNLCYKMYMVSTLTVPVKRGCIDVCPKNSALVKYVCCNTNKCN</sequence>
<reference key="1">
    <citation type="journal article" date="1976" name="Eur. J. Biochem.">
        <title>Snake venom toxins. The amino-acid sequences of three toxins (CM-8, CM-11 and CM-13a) from Naja haje annulifera (Egyptian cobra) venom.</title>
        <authorList>
            <person name="Joubert F.J."/>
        </authorList>
    </citation>
    <scope>PROTEIN SEQUENCE</scope>
    <scope>SUBCELLULAR LOCATION</scope>
    <scope>TOXIC DOSE</scope>
    <source>
        <tissue>Venom</tissue>
    </source>
</reference>
<organism>
    <name type="scientific">Naja annulifera</name>
    <name type="common">Banded Egyptian cobra</name>
    <name type="synonym">Naja haje annulifera</name>
    <dbReference type="NCBI Taxonomy" id="96794"/>
    <lineage>
        <taxon>Eukaryota</taxon>
        <taxon>Metazoa</taxon>
        <taxon>Chordata</taxon>
        <taxon>Craniata</taxon>
        <taxon>Vertebrata</taxon>
        <taxon>Euteleostomi</taxon>
        <taxon>Lepidosauria</taxon>
        <taxon>Squamata</taxon>
        <taxon>Bifurcata</taxon>
        <taxon>Unidentata</taxon>
        <taxon>Episquamata</taxon>
        <taxon>Toxicofera</taxon>
        <taxon>Serpentes</taxon>
        <taxon>Colubroidea</taxon>
        <taxon>Elapidae</taxon>
        <taxon>Elapinae</taxon>
        <taxon>Naja</taxon>
    </lineage>
</organism>
<name>3SA4_NAJHA</name>
<accession>P01461</accession>
<evidence type="ECO:0000250" key="1">
    <source>
        <dbReference type="UniProtKB" id="P60301"/>
    </source>
</evidence>
<evidence type="ECO:0000250" key="2">
    <source>
        <dbReference type="UniProtKB" id="P60304"/>
    </source>
</evidence>
<evidence type="ECO:0000269" key="3">
    <source>
    </source>
</evidence>
<evidence type="ECO:0000305" key="4"/>
<keyword id="KW-0123">Cardiotoxin</keyword>
<keyword id="KW-0204">Cytolysis</keyword>
<keyword id="KW-0903">Direct protein sequencing</keyword>
<keyword id="KW-1015">Disulfide bond</keyword>
<keyword id="KW-0472">Membrane</keyword>
<keyword id="KW-0964">Secreted</keyword>
<keyword id="KW-1052">Target cell membrane</keyword>
<keyword id="KW-1053">Target membrane</keyword>
<keyword id="KW-0800">Toxin</keyword>